<evidence type="ECO:0000250" key="1"/>
<evidence type="ECO:0000305" key="2"/>
<evidence type="ECO:0007829" key="3">
    <source>
        <dbReference type="PDB" id="3BS8"/>
    </source>
</evidence>
<proteinExistence type="evidence at protein level"/>
<keyword id="KW-0002">3D-structure</keyword>
<keyword id="KW-0963">Cytoplasm</keyword>
<keyword id="KW-0413">Isomerase</keyword>
<keyword id="KW-0627">Porphyrin biosynthesis</keyword>
<keyword id="KW-0663">Pyridoxal phosphate</keyword>
<keyword id="KW-1185">Reference proteome</keyword>
<organism>
    <name type="scientific">Bacillus subtilis (strain 168)</name>
    <dbReference type="NCBI Taxonomy" id="224308"/>
    <lineage>
        <taxon>Bacteria</taxon>
        <taxon>Bacillati</taxon>
        <taxon>Bacillota</taxon>
        <taxon>Bacilli</taxon>
        <taxon>Bacillales</taxon>
        <taxon>Bacillaceae</taxon>
        <taxon>Bacillus</taxon>
    </lineage>
</organism>
<reference key="1">
    <citation type="journal article" date="1991" name="J. Bacteriol.">
        <title>The Bacillus subtilis hemAXCDBL gene cluster, which encodes enzymes of the biosynthetic pathway from glutamate to uroporphyrinogen III.</title>
        <authorList>
            <person name="Hansson M."/>
            <person name="Rutberg L."/>
            <person name="Schroeder I."/>
            <person name="Hederstedt L."/>
        </authorList>
    </citation>
    <scope>NUCLEOTIDE SEQUENCE [GENOMIC DNA]</scope>
</reference>
<reference key="2">
    <citation type="journal article" date="1997" name="Nature">
        <title>The complete genome sequence of the Gram-positive bacterium Bacillus subtilis.</title>
        <authorList>
            <person name="Kunst F."/>
            <person name="Ogasawara N."/>
            <person name="Moszer I."/>
            <person name="Albertini A.M."/>
            <person name="Alloni G."/>
            <person name="Azevedo V."/>
            <person name="Bertero M.G."/>
            <person name="Bessieres P."/>
            <person name="Bolotin A."/>
            <person name="Borchert S."/>
            <person name="Borriss R."/>
            <person name="Boursier L."/>
            <person name="Brans A."/>
            <person name="Braun M."/>
            <person name="Brignell S.C."/>
            <person name="Bron S."/>
            <person name="Brouillet S."/>
            <person name="Bruschi C.V."/>
            <person name="Caldwell B."/>
            <person name="Capuano V."/>
            <person name="Carter N.M."/>
            <person name="Choi S.-K."/>
            <person name="Codani J.-J."/>
            <person name="Connerton I.F."/>
            <person name="Cummings N.J."/>
            <person name="Daniel R.A."/>
            <person name="Denizot F."/>
            <person name="Devine K.M."/>
            <person name="Duesterhoeft A."/>
            <person name="Ehrlich S.D."/>
            <person name="Emmerson P.T."/>
            <person name="Entian K.-D."/>
            <person name="Errington J."/>
            <person name="Fabret C."/>
            <person name="Ferrari E."/>
            <person name="Foulger D."/>
            <person name="Fritz C."/>
            <person name="Fujita M."/>
            <person name="Fujita Y."/>
            <person name="Fuma S."/>
            <person name="Galizzi A."/>
            <person name="Galleron N."/>
            <person name="Ghim S.-Y."/>
            <person name="Glaser P."/>
            <person name="Goffeau A."/>
            <person name="Golightly E.J."/>
            <person name="Grandi G."/>
            <person name="Guiseppi G."/>
            <person name="Guy B.J."/>
            <person name="Haga K."/>
            <person name="Haiech J."/>
            <person name="Harwood C.R."/>
            <person name="Henaut A."/>
            <person name="Hilbert H."/>
            <person name="Holsappel S."/>
            <person name="Hosono S."/>
            <person name="Hullo M.-F."/>
            <person name="Itaya M."/>
            <person name="Jones L.-M."/>
            <person name="Joris B."/>
            <person name="Karamata D."/>
            <person name="Kasahara Y."/>
            <person name="Klaerr-Blanchard M."/>
            <person name="Klein C."/>
            <person name="Kobayashi Y."/>
            <person name="Koetter P."/>
            <person name="Koningstein G."/>
            <person name="Krogh S."/>
            <person name="Kumano M."/>
            <person name="Kurita K."/>
            <person name="Lapidus A."/>
            <person name="Lardinois S."/>
            <person name="Lauber J."/>
            <person name="Lazarevic V."/>
            <person name="Lee S.-M."/>
            <person name="Levine A."/>
            <person name="Liu H."/>
            <person name="Masuda S."/>
            <person name="Mauel C."/>
            <person name="Medigue C."/>
            <person name="Medina N."/>
            <person name="Mellado R.P."/>
            <person name="Mizuno M."/>
            <person name="Moestl D."/>
            <person name="Nakai S."/>
            <person name="Noback M."/>
            <person name="Noone D."/>
            <person name="O'Reilly M."/>
            <person name="Ogawa K."/>
            <person name="Ogiwara A."/>
            <person name="Oudega B."/>
            <person name="Park S.-H."/>
            <person name="Parro V."/>
            <person name="Pohl T.M."/>
            <person name="Portetelle D."/>
            <person name="Porwollik S."/>
            <person name="Prescott A.M."/>
            <person name="Presecan E."/>
            <person name="Pujic P."/>
            <person name="Purnelle B."/>
            <person name="Rapoport G."/>
            <person name="Rey M."/>
            <person name="Reynolds S."/>
            <person name="Rieger M."/>
            <person name="Rivolta C."/>
            <person name="Rocha E."/>
            <person name="Roche B."/>
            <person name="Rose M."/>
            <person name="Sadaie Y."/>
            <person name="Sato T."/>
            <person name="Scanlan E."/>
            <person name="Schleich S."/>
            <person name="Schroeter R."/>
            <person name="Scoffone F."/>
            <person name="Sekiguchi J."/>
            <person name="Sekowska A."/>
            <person name="Seror S.J."/>
            <person name="Serror P."/>
            <person name="Shin B.-S."/>
            <person name="Soldo B."/>
            <person name="Sorokin A."/>
            <person name="Tacconi E."/>
            <person name="Takagi T."/>
            <person name="Takahashi H."/>
            <person name="Takemaru K."/>
            <person name="Takeuchi M."/>
            <person name="Tamakoshi A."/>
            <person name="Tanaka T."/>
            <person name="Terpstra P."/>
            <person name="Tognoni A."/>
            <person name="Tosato V."/>
            <person name="Uchiyama S."/>
            <person name="Vandenbol M."/>
            <person name="Vannier F."/>
            <person name="Vassarotti A."/>
            <person name="Viari A."/>
            <person name="Wambutt R."/>
            <person name="Wedler E."/>
            <person name="Wedler H."/>
            <person name="Weitzenegger T."/>
            <person name="Winters P."/>
            <person name="Wipat A."/>
            <person name="Yamamoto H."/>
            <person name="Yamane K."/>
            <person name="Yasumoto K."/>
            <person name="Yata K."/>
            <person name="Yoshida K."/>
            <person name="Yoshikawa H.-F."/>
            <person name="Zumstein E."/>
            <person name="Yoshikawa H."/>
            <person name="Danchin A."/>
        </authorList>
    </citation>
    <scope>NUCLEOTIDE SEQUENCE [LARGE SCALE GENOMIC DNA]</scope>
    <source>
        <strain>168</strain>
    </source>
</reference>
<dbReference type="EC" id="5.4.3.8"/>
<dbReference type="EMBL" id="M57676">
    <property type="protein sequence ID" value="AAA22515.1"/>
    <property type="molecule type" value="Genomic_DNA"/>
</dbReference>
<dbReference type="EMBL" id="AL009126">
    <property type="protein sequence ID" value="CAB14772.1"/>
    <property type="molecule type" value="Genomic_DNA"/>
</dbReference>
<dbReference type="PIR" id="D42728">
    <property type="entry name" value="D42728"/>
</dbReference>
<dbReference type="RefSeq" id="NP_390690.1">
    <property type="nucleotide sequence ID" value="NC_000964.3"/>
</dbReference>
<dbReference type="RefSeq" id="WP_004398699.1">
    <property type="nucleotide sequence ID" value="NZ_OZ025638.1"/>
</dbReference>
<dbReference type="PDB" id="3BS8">
    <property type="method" value="X-ray"/>
    <property type="resolution" value="2.30 A"/>
    <property type="chains" value="A=1-430"/>
</dbReference>
<dbReference type="PDBsum" id="3BS8"/>
<dbReference type="SMR" id="P30949"/>
<dbReference type="FunCoup" id="P30949">
    <property type="interactions" value="616"/>
</dbReference>
<dbReference type="STRING" id="224308.BSU28120"/>
<dbReference type="jPOST" id="P30949"/>
<dbReference type="PaxDb" id="224308-BSU28120"/>
<dbReference type="EnsemblBacteria" id="CAB14772">
    <property type="protein sequence ID" value="CAB14772"/>
    <property type="gene ID" value="BSU_28120"/>
</dbReference>
<dbReference type="GeneID" id="937490"/>
<dbReference type="KEGG" id="bsu:BSU28120"/>
<dbReference type="PATRIC" id="fig|224308.179.peg.3055"/>
<dbReference type="eggNOG" id="COG0001">
    <property type="taxonomic scope" value="Bacteria"/>
</dbReference>
<dbReference type="InParanoid" id="P30949"/>
<dbReference type="OrthoDB" id="9807885at2"/>
<dbReference type="PhylomeDB" id="P30949"/>
<dbReference type="BioCyc" id="BSUB:BSU28120-MONOMER"/>
<dbReference type="BRENDA" id="5.4.3.8">
    <property type="organism ID" value="658"/>
</dbReference>
<dbReference type="UniPathway" id="UPA00251">
    <property type="reaction ID" value="UER00317"/>
</dbReference>
<dbReference type="EvolutionaryTrace" id="P30949"/>
<dbReference type="Proteomes" id="UP000001570">
    <property type="component" value="Chromosome"/>
</dbReference>
<dbReference type="GO" id="GO:0005737">
    <property type="term" value="C:cytoplasm"/>
    <property type="evidence" value="ECO:0007669"/>
    <property type="project" value="UniProtKB-SubCell"/>
</dbReference>
<dbReference type="GO" id="GO:0042286">
    <property type="term" value="F:glutamate-1-semialdehyde 2,1-aminomutase activity"/>
    <property type="evidence" value="ECO:0007669"/>
    <property type="project" value="UniProtKB-UniRule"/>
</dbReference>
<dbReference type="GO" id="GO:0030170">
    <property type="term" value="F:pyridoxal phosphate binding"/>
    <property type="evidence" value="ECO:0007669"/>
    <property type="project" value="InterPro"/>
</dbReference>
<dbReference type="GO" id="GO:0008483">
    <property type="term" value="F:transaminase activity"/>
    <property type="evidence" value="ECO:0007669"/>
    <property type="project" value="InterPro"/>
</dbReference>
<dbReference type="GO" id="GO:0006782">
    <property type="term" value="P:protoporphyrinogen IX biosynthetic process"/>
    <property type="evidence" value="ECO:0007669"/>
    <property type="project" value="UniProtKB-UniRule"/>
</dbReference>
<dbReference type="CDD" id="cd00610">
    <property type="entry name" value="OAT_like"/>
    <property type="match status" value="1"/>
</dbReference>
<dbReference type="FunFam" id="3.40.640.10:FF:000021">
    <property type="entry name" value="Glutamate-1-semialdehyde 2,1-aminomutase"/>
    <property type="match status" value="1"/>
</dbReference>
<dbReference type="Gene3D" id="3.90.1150.10">
    <property type="entry name" value="Aspartate Aminotransferase, domain 1"/>
    <property type="match status" value="1"/>
</dbReference>
<dbReference type="Gene3D" id="3.40.640.10">
    <property type="entry name" value="Type I PLP-dependent aspartate aminotransferase-like (Major domain)"/>
    <property type="match status" value="1"/>
</dbReference>
<dbReference type="HAMAP" id="MF_00375">
    <property type="entry name" value="HemL_aminotrans_3"/>
    <property type="match status" value="1"/>
</dbReference>
<dbReference type="InterPro" id="IPR004639">
    <property type="entry name" value="4pyrrol_synth_GluAld_NH2Trfase"/>
</dbReference>
<dbReference type="InterPro" id="IPR005814">
    <property type="entry name" value="Aminotrans_3"/>
</dbReference>
<dbReference type="InterPro" id="IPR049704">
    <property type="entry name" value="Aminotrans_3_PPA_site"/>
</dbReference>
<dbReference type="InterPro" id="IPR015424">
    <property type="entry name" value="PyrdxlP-dep_Trfase"/>
</dbReference>
<dbReference type="InterPro" id="IPR015421">
    <property type="entry name" value="PyrdxlP-dep_Trfase_major"/>
</dbReference>
<dbReference type="InterPro" id="IPR015422">
    <property type="entry name" value="PyrdxlP-dep_Trfase_small"/>
</dbReference>
<dbReference type="NCBIfam" id="TIGR00713">
    <property type="entry name" value="hemL"/>
    <property type="match status" value="1"/>
</dbReference>
<dbReference type="NCBIfam" id="NF000818">
    <property type="entry name" value="PRK00062.1"/>
    <property type="match status" value="1"/>
</dbReference>
<dbReference type="PANTHER" id="PTHR43713">
    <property type="entry name" value="GLUTAMATE-1-SEMIALDEHYDE 2,1-AMINOMUTASE"/>
    <property type="match status" value="1"/>
</dbReference>
<dbReference type="PANTHER" id="PTHR43713:SF3">
    <property type="entry name" value="GLUTAMATE-1-SEMIALDEHYDE 2,1-AMINOMUTASE 1, CHLOROPLASTIC-RELATED"/>
    <property type="match status" value="1"/>
</dbReference>
<dbReference type="Pfam" id="PF00202">
    <property type="entry name" value="Aminotran_3"/>
    <property type="match status" value="1"/>
</dbReference>
<dbReference type="SUPFAM" id="SSF53383">
    <property type="entry name" value="PLP-dependent transferases"/>
    <property type="match status" value="1"/>
</dbReference>
<dbReference type="PROSITE" id="PS00600">
    <property type="entry name" value="AA_TRANSFER_CLASS_3"/>
    <property type="match status" value="1"/>
</dbReference>
<comment type="catalytic activity">
    <reaction>
        <text>(S)-4-amino-5-oxopentanoate = 5-aminolevulinate</text>
        <dbReference type="Rhea" id="RHEA:14265"/>
        <dbReference type="ChEBI" id="CHEBI:57501"/>
        <dbReference type="ChEBI" id="CHEBI:356416"/>
        <dbReference type="EC" id="5.4.3.8"/>
    </reaction>
</comment>
<comment type="cofactor">
    <cofactor evidence="1">
        <name>pyridoxal 5'-phosphate</name>
        <dbReference type="ChEBI" id="CHEBI:597326"/>
    </cofactor>
</comment>
<comment type="pathway">
    <text>Porphyrin-containing compound metabolism; protoporphyrin-IX biosynthesis; 5-aminolevulinate from L-glutamyl-tRNA(Glu): step 2/2.</text>
</comment>
<comment type="subunit">
    <text evidence="1">Homodimer.</text>
</comment>
<comment type="subcellular location">
    <subcellularLocation>
        <location evidence="2">Cytoplasm</location>
    </subcellularLocation>
</comment>
<comment type="similarity">
    <text evidence="2">Belongs to the class-III pyridoxal-phosphate-dependent aminotransferase family. HemL subfamily.</text>
</comment>
<gene>
    <name type="primary">hemL</name>
    <name type="synonym">hemK</name>
    <name type="ordered locus">BSU28120</name>
</gene>
<sequence>MRSYEKSKTAFKEAQKLMPGGVNSPVRAFKSVDMDPIFMERGKGSKIFDIDGNEYIDYVLSWGPLILGHTNDRVVESLKKVAEYGTSFGAPTEVENELAKLVIDRVPSVEIVRMVSSGTEATMSALRLARGYTGRNKILKFEGCYHGHGDSLLIKAGSGVATLGLPDSPGVPEGIAKNTITVPYNDLESVKLAFQQFGEDIAGVIVEPVAGNMGVVPPQEGFLQGLRDITEQYGSLLIFDEVMTGFRVDYNCAQGYFGVTPDLTCLGKVIGGGLPVGAYGGKAEIMEQIAPSGPIYQAGTLSGNPLAMTAGLETLKQLTPESYKNFIKKGDRLEEGISKTAGAHGIPHTFNRAGSMIGFFFTNEPVINYETAKSSDLKLFASYYKGMANEGVFLPPSQFEGLFLSTAHTDEDIENTIQAAEKVFAEISRR</sequence>
<protein>
    <recommendedName>
        <fullName>Glutamate-1-semialdehyde 2,1-aminomutase</fullName>
        <shortName>GSA</shortName>
        <ecNumber>5.4.3.8</ecNumber>
    </recommendedName>
    <alternativeName>
        <fullName>Glutamate-1-semialdehyde aminotransferase</fullName>
        <shortName>GSA-AT</shortName>
    </alternativeName>
</protein>
<feature type="chain" id="PRO_0000120393" description="Glutamate-1-semialdehyde 2,1-aminomutase">
    <location>
        <begin position="1"/>
        <end position="430"/>
    </location>
</feature>
<feature type="modified residue" description="N6-(pyridoxal phosphate)lysine" evidence="1">
    <location>
        <position position="268"/>
    </location>
</feature>
<feature type="helix" evidence="3">
    <location>
        <begin position="5"/>
        <end position="15"/>
    </location>
</feature>
<feature type="helix" evidence="3">
    <location>
        <begin position="19"/>
        <end position="21"/>
    </location>
</feature>
<feature type="strand" evidence="3">
    <location>
        <begin position="22"/>
        <end position="24"/>
    </location>
</feature>
<feature type="helix" evidence="3">
    <location>
        <begin position="25"/>
        <end position="28"/>
    </location>
</feature>
<feature type="turn" evidence="3">
    <location>
        <begin position="30"/>
        <end position="33"/>
    </location>
</feature>
<feature type="strand" evidence="3">
    <location>
        <begin position="39"/>
        <end position="44"/>
    </location>
</feature>
<feature type="strand" evidence="3">
    <location>
        <begin position="46"/>
        <end position="49"/>
    </location>
</feature>
<feature type="strand" evidence="3">
    <location>
        <begin position="54"/>
        <end position="59"/>
    </location>
</feature>
<feature type="helix" evidence="3">
    <location>
        <begin position="60"/>
        <end position="62"/>
    </location>
</feature>
<feature type="helix" evidence="3">
    <location>
        <begin position="72"/>
        <end position="84"/>
    </location>
</feature>
<feature type="helix" evidence="3">
    <location>
        <begin position="93"/>
        <end position="105"/>
    </location>
</feature>
<feature type="strand" evidence="3">
    <location>
        <begin position="110"/>
        <end position="116"/>
    </location>
</feature>
<feature type="helix" evidence="3">
    <location>
        <begin position="118"/>
        <end position="133"/>
    </location>
</feature>
<feature type="strand" evidence="3">
    <location>
        <begin position="137"/>
        <end position="142"/>
    </location>
</feature>
<feature type="helix" evidence="3">
    <location>
        <begin position="150"/>
        <end position="152"/>
    </location>
</feature>
<feature type="strand" evidence="3">
    <location>
        <begin position="158"/>
        <end position="161"/>
    </location>
</feature>
<feature type="strand" evidence="3">
    <location>
        <begin position="165"/>
        <end position="168"/>
    </location>
</feature>
<feature type="strand" evidence="3">
    <location>
        <begin position="179"/>
        <end position="183"/>
    </location>
</feature>
<feature type="helix" evidence="3">
    <location>
        <begin position="187"/>
        <end position="197"/>
    </location>
</feature>
<feature type="helix" evidence="3">
    <location>
        <begin position="198"/>
        <end position="200"/>
    </location>
</feature>
<feature type="strand" evidence="3">
    <location>
        <begin position="201"/>
        <end position="206"/>
    </location>
</feature>
<feature type="strand" evidence="3">
    <location>
        <begin position="208"/>
        <end position="210"/>
    </location>
</feature>
<feature type="strand" evidence="3">
    <location>
        <begin position="212"/>
        <end position="214"/>
    </location>
</feature>
<feature type="helix" evidence="3">
    <location>
        <begin position="222"/>
        <end position="233"/>
    </location>
</feature>
<feature type="strand" evidence="3">
    <location>
        <begin position="236"/>
        <end position="240"/>
    </location>
</feature>
<feature type="turn" evidence="3">
    <location>
        <begin position="242"/>
        <end position="247"/>
    </location>
</feature>
<feature type="helix" evidence="3">
    <location>
        <begin position="252"/>
        <end position="256"/>
    </location>
</feature>
<feature type="strand" evidence="3">
    <location>
        <begin position="262"/>
        <end position="266"/>
    </location>
</feature>
<feature type="helix" evidence="3">
    <location>
        <begin position="268"/>
        <end position="271"/>
    </location>
</feature>
<feature type="strand" evidence="3">
    <location>
        <begin position="277"/>
        <end position="281"/>
    </location>
</feature>
<feature type="helix" evidence="3">
    <location>
        <begin position="283"/>
        <end position="286"/>
    </location>
</feature>
<feature type="turn" evidence="3">
    <location>
        <begin position="290"/>
        <end position="292"/>
    </location>
</feature>
<feature type="strand" evidence="3">
    <location>
        <begin position="293"/>
        <end position="295"/>
    </location>
</feature>
<feature type="helix" evidence="3">
    <location>
        <begin position="305"/>
        <end position="316"/>
    </location>
</feature>
<feature type="helix" evidence="3">
    <location>
        <begin position="320"/>
        <end position="343"/>
    </location>
</feature>
<feature type="strand" evidence="3">
    <location>
        <begin position="349"/>
        <end position="353"/>
    </location>
</feature>
<feature type="strand" evidence="3">
    <location>
        <begin position="356"/>
        <end position="364"/>
    </location>
</feature>
<feature type="helix" evidence="3">
    <location>
        <begin position="369"/>
        <end position="372"/>
    </location>
</feature>
<feature type="helix" evidence="3">
    <location>
        <begin position="377"/>
        <end position="389"/>
    </location>
</feature>
<feature type="strand" evidence="3">
    <location>
        <begin position="396"/>
        <end position="400"/>
    </location>
</feature>
<feature type="helix" evidence="3">
    <location>
        <begin position="410"/>
        <end position="429"/>
    </location>
</feature>
<accession>P30949</accession>
<name>GSA_BACSU</name>